<gene>
    <name evidence="1" type="primary">aat</name>
    <name type="ordered locus">CYA_0634</name>
</gene>
<accession>Q2JWL1</accession>
<reference key="1">
    <citation type="journal article" date="2007" name="ISME J.">
        <title>Population level functional diversity in a microbial community revealed by comparative genomic and metagenomic analyses.</title>
        <authorList>
            <person name="Bhaya D."/>
            <person name="Grossman A.R."/>
            <person name="Steunou A.-S."/>
            <person name="Khuri N."/>
            <person name="Cohan F.M."/>
            <person name="Hamamura N."/>
            <person name="Melendrez M.C."/>
            <person name="Bateson M.M."/>
            <person name="Ward D.M."/>
            <person name="Heidelberg J.F."/>
        </authorList>
    </citation>
    <scope>NUCLEOTIDE SEQUENCE [LARGE SCALE GENOMIC DNA]</scope>
    <source>
        <strain>JA-3-3Ab</strain>
    </source>
</reference>
<sequence length="192" mass="21585">MQVDIGAILTGYAQGYFLMADEETGSLAWYGTEQHALIPLDERFHCPRSLRPLVRGSCFQVRINGAFEQVVEGCAARPQTWISSELKQIYLALHQAGFAHSFETWQGDTLAGGILGIALGAAFIGESMFYRIPNASKVALVKLVEHLRERGFRLFDAQLMNPHLARFGAFLMDGRDYQELLQQCLRIPCRFD</sequence>
<keyword id="KW-0012">Acyltransferase</keyword>
<keyword id="KW-0963">Cytoplasm</keyword>
<keyword id="KW-0808">Transferase</keyword>
<organism>
    <name type="scientific">Synechococcus sp. (strain JA-3-3Ab)</name>
    <name type="common">Cyanobacteria bacterium Yellowstone A-Prime</name>
    <dbReference type="NCBI Taxonomy" id="321327"/>
    <lineage>
        <taxon>Bacteria</taxon>
        <taxon>Bacillati</taxon>
        <taxon>Cyanobacteriota</taxon>
        <taxon>Cyanophyceae</taxon>
        <taxon>Synechococcales</taxon>
        <taxon>Synechococcaceae</taxon>
        <taxon>Synechococcus</taxon>
    </lineage>
</organism>
<dbReference type="EC" id="2.3.2.6" evidence="1"/>
<dbReference type="EMBL" id="CP000239">
    <property type="protein sequence ID" value="ABC98848.1"/>
    <property type="molecule type" value="Genomic_DNA"/>
</dbReference>
<dbReference type="RefSeq" id="WP_011429531.1">
    <property type="nucleotide sequence ID" value="NC_007775.1"/>
</dbReference>
<dbReference type="SMR" id="Q2JWL1"/>
<dbReference type="STRING" id="321327.CYA_0634"/>
<dbReference type="KEGG" id="cya:CYA_0634"/>
<dbReference type="eggNOG" id="COG2360">
    <property type="taxonomic scope" value="Bacteria"/>
</dbReference>
<dbReference type="HOGENOM" id="CLU_075045_1_1_3"/>
<dbReference type="OrthoDB" id="9790282at2"/>
<dbReference type="Proteomes" id="UP000008818">
    <property type="component" value="Chromosome"/>
</dbReference>
<dbReference type="GO" id="GO:0005737">
    <property type="term" value="C:cytoplasm"/>
    <property type="evidence" value="ECO:0007669"/>
    <property type="project" value="UniProtKB-SubCell"/>
</dbReference>
<dbReference type="GO" id="GO:0008914">
    <property type="term" value="F:leucyl-tRNA--protein transferase activity"/>
    <property type="evidence" value="ECO:0007669"/>
    <property type="project" value="UniProtKB-UniRule"/>
</dbReference>
<dbReference type="GO" id="GO:0030163">
    <property type="term" value="P:protein catabolic process"/>
    <property type="evidence" value="ECO:0007669"/>
    <property type="project" value="UniProtKB-UniRule"/>
</dbReference>
<dbReference type="Gene3D" id="3.40.630.70">
    <property type="entry name" value="Leucyl/phenylalanyl-tRNA-protein transferase, C-terminal domain"/>
    <property type="match status" value="1"/>
</dbReference>
<dbReference type="HAMAP" id="MF_00688">
    <property type="entry name" value="Leu_Phe_trans"/>
    <property type="match status" value="1"/>
</dbReference>
<dbReference type="InterPro" id="IPR016181">
    <property type="entry name" value="Acyl_CoA_acyltransferase"/>
</dbReference>
<dbReference type="InterPro" id="IPR004616">
    <property type="entry name" value="Leu/Phe-tRNA_Trfase"/>
</dbReference>
<dbReference type="InterPro" id="IPR042203">
    <property type="entry name" value="Leu/Phe-tRNA_Trfase_C"/>
</dbReference>
<dbReference type="NCBIfam" id="TIGR00667">
    <property type="entry name" value="aat"/>
    <property type="match status" value="1"/>
</dbReference>
<dbReference type="PANTHER" id="PTHR30098">
    <property type="entry name" value="LEUCYL/PHENYLALANYL-TRNA--PROTEIN TRANSFERASE"/>
    <property type="match status" value="1"/>
</dbReference>
<dbReference type="PANTHER" id="PTHR30098:SF2">
    <property type="entry name" value="LEUCYL_PHENYLALANYL-TRNA--PROTEIN TRANSFERASE"/>
    <property type="match status" value="1"/>
</dbReference>
<dbReference type="Pfam" id="PF03588">
    <property type="entry name" value="Leu_Phe_trans"/>
    <property type="match status" value="1"/>
</dbReference>
<dbReference type="SUPFAM" id="SSF55729">
    <property type="entry name" value="Acyl-CoA N-acyltransferases (Nat)"/>
    <property type="match status" value="1"/>
</dbReference>
<evidence type="ECO:0000255" key="1">
    <source>
        <dbReference type="HAMAP-Rule" id="MF_00688"/>
    </source>
</evidence>
<proteinExistence type="inferred from homology"/>
<feature type="chain" id="PRO_0000258104" description="Leucyl/phenylalanyl-tRNA--protein transferase">
    <location>
        <begin position="1"/>
        <end position="192"/>
    </location>
</feature>
<comment type="function">
    <text evidence="1">Functions in the N-end rule pathway of protein degradation where it conjugates Leu, Phe and, less efficiently, Met from aminoacyl-tRNAs to the N-termini of proteins containing an N-terminal arginine or lysine.</text>
</comment>
<comment type="catalytic activity">
    <reaction evidence="1">
        <text>N-terminal L-lysyl-[protein] + L-leucyl-tRNA(Leu) = N-terminal L-leucyl-L-lysyl-[protein] + tRNA(Leu) + H(+)</text>
        <dbReference type="Rhea" id="RHEA:12340"/>
        <dbReference type="Rhea" id="RHEA-COMP:9613"/>
        <dbReference type="Rhea" id="RHEA-COMP:9622"/>
        <dbReference type="Rhea" id="RHEA-COMP:12670"/>
        <dbReference type="Rhea" id="RHEA-COMP:12671"/>
        <dbReference type="ChEBI" id="CHEBI:15378"/>
        <dbReference type="ChEBI" id="CHEBI:65249"/>
        <dbReference type="ChEBI" id="CHEBI:78442"/>
        <dbReference type="ChEBI" id="CHEBI:78494"/>
        <dbReference type="ChEBI" id="CHEBI:133043"/>
        <dbReference type="EC" id="2.3.2.6"/>
    </reaction>
</comment>
<comment type="catalytic activity">
    <reaction evidence="1">
        <text>N-terminal L-arginyl-[protein] + L-leucyl-tRNA(Leu) = N-terminal L-leucyl-L-arginyl-[protein] + tRNA(Leu) + H(+)</text>
        <dbReference type="Rhea" id="RHEA:50416"/>
        <dbReference type="Rhea" id="RHEA-COMP:9613"/>
        <dbReference type="Rhea" id="RHEA-COMP:9622"/>
        <dbReference type="Rhea" id="RHEA-COMP:12672"/>
        <dbReference type="Rhea" id="RHEA-COMP:12673"/>
        <dbReference type="ChEBI" id="CHEBI:15378"/>
        <dbReference type="ChEBI" id="CHEBI:64719"/>
        <dbReference type="ChEBI" id="CHEBI:78442"/>
        <dbReference type="ChEBI" id="CHEBI:78494"/>
        <dbReference type="ChEBI" id="CHEBI:133044"/>
        <dbReference type="EC" id="2.3.2.6"/>
    </reaction>
</comment>
<comment type="catalytic activity">
    <reaction evidence="1">
        <text>L-phenylalanyl-tRNA(Phe) + an N-terminal L-alpha-aminoacyl-[protein] = an N-terminal L-phenylalanyl-L-alpha-aminoacyl-[protein] + tRNA(Phe)</text>
        <dbReference type="Rhea" id="RHEA:43632"/>
        <dbReference type="Rhea" id="RHEA-COMP:9668"/>
        <dbReference type="Rhea" id="RHEA-COMP:9699"/>
        <dbReference type="Rhea" id="RHEA-COMP:10636"/>
        <dbReference type="Rhea" id="RHEA-COMP:10637"/>
        <dbReference type="ChEBI" id="CHEBI:78442"/>
        <dbReference type="ChEBI" id="CHEBI:78531"/>
        <dbReference type="ChEBI" id="CHEBI:78597"/>
        <dbReference type="ChEBI" id="CHEBI:83561"/>
        <dbReference type="EC" id="2.3.2.6"/>
    </reaction>
</comment>
<comment type="subcellular location">
    <subcellularLocation>
        <location evidence="1">Cytoplasm</location>
    </subcellularLocation>
</comment>
<comment type="similarity">
    <text evidence="1">Belongs to the L/F-transferase family.</text>
</comment>
<protein>
    <recommendedName>
        <fullName evidence="1">Leucyl/phenylalanyl-tRNA--protein transferase</fullName>
        <ecNumber evidence="1">2.3.2.6</ecNumber>
    </recommendedName>
    <alternativeName>
        <fullName evidence="1">L/F-transferase</fullName>
    </alternativeName>
    <alternativeName>
        <fullName evidence="1">Leucyltransferase</fullName>
    </alternativeName>
    <alternativeName>
        <fullName evidence="1">Phenyalanyltransferase</fullName>
    </alternativeName>
</protein>
<name>LFTR_SYNJA</name>